<keyword id="KW-0028">Amino-acid biosynthesis</keyword>
<keyword id="KW-0032">Aminotransferase</keyword>
<keyword id="KW-0963">Cytoplasm</keyword>
<keyword id="KW-0663">Pyridoxal phosphate</keyword>
<keyword id="KW-0664">Pyridoxine biosynthesis</keyword>
<keyword id="KW-0718">Serine biosynthesis</keyword>
<keyword id="KW-0808">Transferase</keyword>
<sequence>MERVYNFSAGPAVLPVPVLEKVQRELLSYNGSGMSVMELSHRSELFQNILDDAESLIRELMEIPENYKVLFLQGGASLQFDMVPMNLANGKKAAYVNTGSWAKKAISEAKKIQGVEVEVIASSEDRNFSYIPEIPTVSSDAAYLHVTTNNTIEGTAMFDVPDSAVPVVADMSSNILSSVYDVKKFGLIYAGAQKNIGPAGLTLVIVREDLIGQVEGLPSMLDFKVQAENDSMYNTPPTFAIYVAKLVFEWIKEQGGVAGIEALNRKKAALLYNYIDQSDFFSSPVEPSARSLTNVPFVTNSAEFDKAFVQEAEANGFKNLKGHRSVGGMRASLYNAFPIEGVEALIAFMEKFANARKGGEVRV</sequence>
<evidence type="ECO:0000255" key="1">
    <source>
        <dbReference type="HAMAP-Rule" id="MF_00160"/>
    </source>
</evidence>
<reference key="1">
    <citation type="journal article" date="2004" name="Nucleic Acids Res.">
        <title>Whole genome comparisons of serotype 4b and 1/2a strains of the food-borne pathogen Listeria monocytogenes reveal new insights into the core genome components of this species.</title>
        <authorList>
            <person name="Nelson K.E."/>
            <person name="Fouts D.E."/>
            <person name="Mongodin E.F."/>
            <person name="Ravel J."/>
            <person name="DeBoy R.T."/>
            <person name="Kolonay J.F."/>
            <person name="Rasko D.A."/>
            <person name="Angiuoli S.V."/>
            <person name="Gill S.R."/>
            <person name="Paulsen I.T."/>
            <person name="Peterson J.D."/>
            <person name="White O."/>
            <person name="Nelson W.C."/>
            <person name="Nierman W.C."/>
            <person name="Beanan M.J."/>
            <person name="Brinkac L.M."/>
            <person name="Daugherty S.C."/>
            <person name="Dodson R.J."/>
            <person name="Durkin A.S."/>
            <person name="Madupu R."/>
            <person name="Haft D.H."/>
            <person name="Selengut J."/>
            <person name="Van Aken S.E."/>
            <person name="Khouri H.M."/>
            <person name="Fedorova N."/>
            <person name="Forberger H.A."/>
            <person name="Tran B."/>
            <person name="Kathariou S."/>
            <person name="Wonderling L.D."/>
            <person name="Uhlich G.A."/>
            <person name="Bayles D.O."/>
            <person name="Luchansky J.B."/>
            <person name="Fraser C.M."/>
        </authorList>
    </citation>
    <scope>NUCLEOTIDE SEQUENCE [LARGE SCALE GENOMIC DNA]</scope>
    <source>
        <strain>F2365</strain>
    </source>
</reference>
<name>SERC_LISMF</name>
<accession>Q71VT6</accession>
<comment type="function">
    <text evidence="1">Catalyzes the reversible conversion of 3-phosphohydroxypyruvate to phosphoserine and of 3-hydroxy-2-oxo-4-phosphonooxybutanoate to phosphohydroxythreonine.</text>
</comment>
<comment type="catalytic activity">
    <reaction evidence="1">
        <text>O-phospho-L-serine + 2-oxoglutarate = 3-phosphooxypyruvate + L-glutamate</text>
        <dbReference type="Rhea" id="RHEA:14329"/>
        <dbReference type="ChEBI" id="CHEBI:16810"/>
        <dbReference type="ChEBI" id="CHEBI:18110"/>
        <dbReference type="ChEBI" id="CHEBI:29985"/>
        <dbReference type="ChEBI" id="CHEBI:57524"/>
        <dbReference type="EC" id="2.6.1.52"/>
    </reaction>
</comment>
<comment type="catalytic activity">
    <reaction evidence="1">
        <text>4-(phosphooxy)-L-threonine + 2-oxoglutarate = (R)-3-hydroxy-2-oxo-4-phosphooxybutanoate + L-glutamate</text>
        <dbReference type="Rhea" id="RHEA:16573"/>
        <dbReference type="ChEBI" id="CHEBI:16810"/>
        <dbReference type="ChEBI" id="CHEBI:29985"/>
        <dbReference type="ChEBI" id="CHEBI:58452"/>
        <dbReference type="ChEBI" id="CHEBI:58538"/>
        <dbReference type="EC" id="2.6.1.52"/>
    </reaction>
</comment>
<comment type="cofactor">
    <cofactor evidence="1">
        <name>pyridoxal 5'-phosphate</name>
        <dbReference type="ChEBI" id="CHEBI:597326"/>
    </cofactor>
    <text evidence="1">Binds 1 pyridoxal phosphate per subunit.</text>
</comment>
<comment type="pathway">
    <text evidence="1">Amino-acid biosynthesis; L-serine biosynthesis; L-serine from 3-phospho-D-glycerate: step 2/3.</text>
</comment>
<comment type="subunit">
    <text evidence="1">Homodimer.</text>
</comment>
<comment type="subcellular location">
    <subcellularLocation>
        <location evidence="1">Cytoplasm</location>
    </subcellularLocation>
</comment>
<comment type="similarity">
    <text evidence="1">Belongs to the class-V pyridoxal-phosphate-dependent aminotransferase family. SerC subfamily.</text>
</comment>
<protein>
    <recommendedName>
        <fullName evidence="1">Phosphoserine aminotransferase</fullName>
        <ecNumber evidence="1">2.6.1.52</ecNumber>
    </recommendedName>
    <alternativeName>
        <fullName evidence="1">Phosphohydroxythreonine aminotransferase</fullName>
        <shortName evidence="1">PSAT</shortName>
    </alternativeName>
</protein>
<dbReference type="EC" id="2.6.1.52" evidence="1"/>
<dbReference type="EMBL" id="AE017262">
    <property type="protein sequence ID" value="AAT05580.1"/>
    <property type="molecule type" value="Genomic_DNA"/>
</dbReference>
<dbReference type="RefSeq" id="WP_003733356.1">
    <property type="nucleotide sequence ID" value="NC_002973.6"/>
</dbReference>
<dbReference type="SMR" id="Q71VT6"/>
<dbReference type="KEGG" id="lmf:LMOf2365_2816"/>
<dbReference type="HOGENOM" id="CLU_034866_0_2_9"/>
<dbReference type="UniPathway" id="UPA00135">
    <property type="reaction ID" value="UER00197"/>
</dbReference>
<dbReference type="GO" id="GO:0005737">
    <property type="term" value="C:cytoplasm"/>
    <property type="evidence" value="ECO:0007669"/>
    <property type="project" value="UniProtKB-SubCell"/>
</dbReference>
<dbReference type="GO" id="GO:0004648">
    <property type="term" value="F:O-phospho-L-serine:2-oxoglutarate aminotransferase activity"/>
    <property type="evidence" value="ECO:0007669"/>
    <property type="project" value="UniProtKB-UniRule"/>
</dbReference>
<dbReference type="GO" id="GO:0030170">
    <property type="term" value="F:pyridoxal phosphate binding"/>
    <property type="evidence" value="ECO:0007669"/>
    <property type="project" value="UniProtKB-UniRule"/>
</dbReference>
<dbReference type="GO" id="GO:0006564">
    <property type="term" value="P:L-serine biosynthetic process"/>
    <property type="evidence" value="ECO:0007669"/>
    <property type="project" value="UniProtKB-UniRule"/>
</dbReference>
<dbReference type="GO" id="GO:0008615">
    <property type="term" value="P:pyridoxine biosynthetic process"/>
    <property type="evidence" value="ECO:0007669"/>
    <property type="project" value="UniProtKB-KW"/>
</dbReference>
<dbReference type="FunFam" id="3.40.640.10:FF:000010">
    <property type="entry name" value="Phosphoserine aminotransferase"/>
    <property type="match status" value="1"/>
</dbReference>
<dbReference type="FunFam" id="3.90.1150.10:FF:000006">
    <property type="entry name" value="Phosphoserine aminotransferase"/>
    <property type="match status" value="1"/>
</dbReference>
<dbReference type="Gene3D" id="3.90.1150.10">
    <property type="entry name" value="Aspartate Aminotransferase, domain 1"/>
    <property type="match status" value="1"/>
</dbReference>
<dbReference type="Gene3D" id="3.40.640.10">
    <property type="entry name" value="Type I PLP-dependent aspartate aminotransferase-like (Major domain)"/>
    <property type="match status" value="1"/>
</dbReference>
<dbReference type="HAMAP" id="MF_00160">
    <property type="entry name" value="SerC_aminotrans_5"/>
    <property type="match status" value="1"/>
</dbReference>
<dbReference type="InterPro" id="IPR000192">
    <property type="entry name" value="Aminotrans_V_dom"/>
</dbReference>
<dbReference type="InterPro" id="IPR020578">
    <property type="entry name" value="Aminotrans_V_PyrdxlP_BS"/>
</dbReference>
<dbReference type="InterPro" id="IPR022278">
    <property type="entry name" value="Pser_aminoTfrase"/>
</dbReference>
<dbReference type="InterPro" id="IPR015424">
    <property type="entry name" value="PyrdxlP-dep_Trfase"/>
</dbReference>
<dbReference type="InterPro" id="IPR015421">
    <property type="entry name" value="PyrdxlP-dep_Trfase_major"/>
</dbReference>
<dbReference type="InterPro" id="IPR015422">
    <property type="entry name" value="PyrdxlP-dep_Trfase_small"/>
</dbReference>
<dbReference type="NCBIfam" id="NF003764">
    <property type="entry name" value="PRK05355.1"/>
    <property type="match status" value="1"/>
</dbReference>
<dbReference type="NCBIfam" id="TIGR01364">
    <property type="entry name" value="serC_1"/>
    <property type="match status" value="1"/>
</dbReference>
<dbReference type="PANTHER" id="PTHR43247">
    <property type="entry name" value="PHOSPHOSERINE AMINOTRANSFERASE"/>
    <property type="match status" value="1"/>
</dbReference>
<dbReference type="PANTHER" id="PTHR43247:SF1">
    <property type="entry name" value="PHOSPHOSERINE AMINOTRANSFERASE"/>
    <property type="match status" value="1"/>
</dbReference>
<dbReference type="Pfam" id="PF00266">
    <property type="entry name" value="Aminotran_5"/>
    <property type="match status" value="1"/>
</dbReference>
<dbReference type="PIRSF" id="PIRSF000525">
    <property type="entry name" value="SerC"/>
    <property type="match status" value="1"/>
</dbReference>
<dbReference type="SUPFAM" id="SSF53383">
    <property type="entry name" value="PLP-dependent transferases"/>
    <property type="match status" value="1"/>
</dbReference>
<dbReference type="PROSITE" id="PS00595">
    <property type="entry name" value="AA_TRANSFER_CLASS_5"/>
    <property type="match status" value="1"/>
</dbReference>
<proteinExistence type="inferred from homology"/>
<gene>
    <name evidence="1" type="primary">serC</name>
    <name type="ordered locus">LMOf2365_2816</name>
</gene>
<feature type="chain" id="PRO_0000150184" description="Phosphoserine aminotransferase">
    <location>
        <begin position="1"/>
        <end position="363"/>
    </location>
</feature>
<feature type="binding site" evidence="1">
    <location>
        <position position="42"/>
    </location>
    <ligand>
        <name>L-glutamate</name>
        <dbReference type="ChEBI" id="CHEBI:29985"/>
    </ligand>
</feature>
<feature type="binding site" evidence="1">
    <location>
        <begin position="76"/>
        <end position="77"/>
    </location>
    <ligand>
        <name>pyridoxal 5'-phosphate</name>
        <dbReference type="ChEBI" id="CHEBI:597326"/>
    </ligand>
</feature>
<feature type="binding site" evidence="1">
    <location>
        <position position="101"/>
    </location>
    <ligand>
        <name>pyridoxal 5'-phosphate</name>
        <dbReference type="ChEBI" id="CHEBI:597326"/>
    </ligand>
</feature>
<feature type="binding site" evidence="1">
    <location>
        <position position="151"/>
    </location>
    <ligand>
        <name>pyridoxal 5'-phosphate</name>
        <dbReference type="ChEBI" id="CHEBI:597326"/>
    </ligand>
</feature>
<feature type="binding site" evidence="1">
    <location>
        <position position="170"/>
    </location>
    <ligand>
        <name>pyridoxal 5'-phosphate</name>
        <dbReference type="ChEBI" id="CHEBI:597326"/>
    </ligand>
</feature>
<feature type="binding site" evidence="1">
    <location>
        <position position="193"/>
    </location>
    <ligand>
        <name>pyridoxal 5'-phosphate</name>
        <dbReference type="ChEBI" id="CHEBI:597326"/>
    </ligand>
</feature>
<feature type="binding site" evidence="1">
    <location>
        <begin position="234"/>
        <end position="235"/>
    </location>
    <ligand>
        <name>pyridoxal 5'-phosphate</name>
        <dbReference type="ChEBI" id="CHEBI:597326"/>
    </ligand>
</feature>
<feature type="modified residue" description="N6-(pyridoxal phosphate)lysine" evidence="1">
    <location>
        <position position="194"/>
    </location>
</feature>
<organism>
    <name type="scientific">Listeria monocytogenes serotype 4b (strain F2365)</name>
    <dbReference type="NCBI Taxonomy" id="265669"/>
    <lineage>
        <taxon>Bacteria</taxon>
        <taxon>Bacillati</taxon>
        <taxon>Bacillota</taxon>
        <taxon>Bacilli</taxon>
        <taxon>Bacillales</taxon>
        <taxon>Listeriaceae</taxon>
        <taxon>Listeria</taxon>
    </lineage>
</organism>